<accession>Q5T4I8</accession>
<accession>Q5T4I7</accession>
<accession>Q96AS6</accession>
<reference key="1">
    <citation type="journal article" date="2003" name="Nature">
        <title>The DNA sequence and analysis of human chromosome 6.</title>
        <authorList>
            <person name="Mungall A.J."/>
            <person name="Palmer S.A."/>
            <person name="Sims S.K."/>
            <person name="Edwards C.A."/>
            <person name="Ashurst J.L."/>
            <person name="Wilming L."/>
            <person name="Jones M.C."/>
            <person name="Horton R."/>
            <person name="Hunt S.E."/>
            <person name="Scott C.E."/>
            <person name="Gilbert J.G.R."/>
            <person name="Clamp M.E."/>
            <person name="Bethel G."/>
            <person name="Milne S."/>
            <person name="Ainscough R."/>
            <person name="Almeida J.P."/>
            <person name="Ambrose K.D."/>
            <person name="Andrews T.D."/>
            <person name="Ashwell R.I.S."/>
            <person name="Babbage A.K."/>
            <person name="Bagguley C.L."/>
            <person name="Bailey J."/>
            <person name="Banerjee R."/>
            <person name="Barker D.J."/>
            <person name="Barlow K.F."/>
            <person name="Bates K."/>
            <person name="Beare D.M."/>
            <person name="Beasley H."/>
            <person name="Beasley O."/>
            <person name="Bird C.P."/>
            <person name="Blakey S.E."/>
            <person name="Bray-Allen S."/>
            <person name="Brook J."/>
            <person name="Brown A.J."/>
            <person name="Brown J.Y."/>
            <person name="Burford D.C."/>
            <person name="Burrill W."/>
            <person name="Burton J."/>
            <person name="Carder C."/>
            <person name="Carter N.P."/>
            <person name="Chapman J.C."/>
            <person name="Clark S.Y."/>
            <person name="Clark G."/>
            <person name="Clee C.M."/>
            <person name="Clegg S."/>
            <person name="Cobley V."/>
            <person name="Collier R.E."/>
            <person name="Collins J.E."/>
            <person name="Colman L.K."/>
            <person name="Corby N.R."/>
            <person name="Coville G.J."/>
            <person name="Culley K.M."/>
            <person name="Dhami P."/>
            <person name="Davies J."/>
            <person name="Dunn M."/>
            <person name="Earthrowl M.E."/>
            <person name="Ellington A.E."/>
            <person name="Evans K.A."/>
            <person name="Faulkner L."/>
            <person name="Francis M.D."/>
            <person name="Frankish A."/>
            <person name="Frankland J."/>
            <person name="French L."/>
            <person name="Garner P."/>
            <person name="Garnett J."/>
            <person name="Ghori M.J."/>
            <person name="Gilby L.M."/>
            <person name="Gillson C.J."/>
            <person name="Glithero R.J."/>
            <person name="Grafham D.V."/>
            <person name="Grant M."/>
            <person name="Gribble S."/>
            <person name="Griffiths C."/>
            <person name="Griffiths M.N.D."/>
            <person name="Hall R."/>
            <person name="Halls K.S."/>
            <person name="Hammond S."/>
            <person name="Harley J.L."/>
            <person name="Hart E.A."/>
            <person name="Heath P.D."/>
            <person name="Heathcott R."/>
            <person name="Holmes S.J."/>
            <person name="Howden P.J."/>
            <person name="Howe K.L."/>
            <person name="Howell G.R."/>
            <person name="Huckle E."/>
            <person name="Humphray S.J."/>
            <person name="Humphries M.D."/>
            <person name="Hunt A.R."/>
            <person name="Johnson C.M."/>
            <person name="Joy A.A."/>
            <person name="Kay M."/>
            <person name="Keenan S.J."/>
            <person name="Kimberley A.M."/>
            <person name="King A."/>
            <person name="Laird G.K."/>
            <person name="Langford C."/>
            <person name="Lawlor S."/>
            <person name="Leongamornlert D.A."/>
            <person name="Leversha M."/>
            <person name="Lloyd C.R."/>
            <person name="Lloyd D.M."/>
            <person name="Loveland J.E."/>
            <person name="Lovell J."/>
            <person name="Martin S."/>
            <person name="Mashreghi-Mohammadi M."/>
            <person name="Maslen G.L."/>
            <person name="Matthews L."/>
            <person name="McCann O.T."/>
            <person name="McLaren S.J."/>
            <person name="McLay K."/>
            <person name="McMurray A."/>
            <person name="Moore M.J.F."/>
            <person name="Mullikin J.C."/>
            <person name="Niblett D."/>
            <person name="Nickerson T."/>
            <person name="Novik K.L."/>
            <person name="Oliver K."/>
            <person name="Overton-Larty E.K."/>
            <person name="Parker A."/>
            <person name="Patel R."/>
            <person name="Pearce A.V."/>
            <person name="Peck A.I."/>
            <person name="Phillimore B.J.C.T."/>
            <person name="Phillips S."/>
            <person name="Plumb R.W."/>
            <person name="Porter K.M."/>
            <person name="Ramsey Y."/>
            <person name="Ranby S.A."/>
            <person name="Rice C.M."/>
            <person name="Ross M.T."/>
            <person name="Searle S.M."/>
            <person name="Sehra H.K."/>
            <person name="Sheridan E."/>
            <person name="Skuce C.D."/>
            <person name="Smith S."/>
            <person name="Smith M."/>
            <person name="Spraggon L."/>
            <person name="Squares S.L."/>
            <person name="Steward C.A."/>
            <person name="Sycamore N."/>
            <person name="Tamlyn-Hall G."/>
            <person name="Tester J."/>
            <person name="Theaker A.J."/>
            <person name="Thomas D.W."/>
            <person name="Thorpe A."/>
            <person name="Tracey A."/>
            <person name="Tromans A."/>
            <person name="Tubby B."/>
            <person name="Wall M."/>
            <person name="Wallis J.M."/>
            <person name="West A.P."/>
            <person name="White S.S."/>
            <person name="Whitehead S.L."/>
            <person name="Whittaker H."/>
            <person name="Wild A."/>
            <person name="Willey D.J."/>
            <person name="Wilmer T.E."/>
            <person name="Wood J.M."/>
            <person name="Wray P.W."/>
            <person name="Wyatt J.C."/>
            <person name="Young L."/>
            <person name="Younger R.M."/>
            <person name="Bentley D.R."/>
            <person name="Coulson A."/>
            <person name="Durbin R.M."/>
            <person name="Hubbard T."/>
            <person name="Sulston J.E."/>
            <person name="Dunham I."/>
            <person name="Rogers J."/>
            <person name="Beck S."/>
        </authorList>
    </citation>
    <scope>NUCLEOTIDE SEQUENCE [LARGE SCALE GENOMIC DNA]</scope>
</reference>
<reference key="2">
    <citation type="journal article" date="2004" name="Genome Res.">
        <title>The status, quality, and expansion of the NIH full-length cDNA project: the Mammalian Gene Collection (MGC).</title>
        <authorList>
            <consortium name="The MGC Project Team"/>
        </authorList>
    </citation>
    <scope>NUCLEOTIDE SEQUENCE [LARGE SCALE MRNA] (ISOFORM 2)</scope>
    <source>
        <tissue>Bone marrow</tissue>
    </source>
</reference>
<comment type="alternative products">
    <event type="alternative splicing"/>
    <isoform>
        <id>Q5T4I8-1</id>
        <name>1</name>
        <sequence type="displayed"/>
    </isoform>
    <isoform>
        <id>Q5T4I8-2</id>
        <name>2</name>
        <sequence type="described" ref="VSP_026991"/>
    </isoform>
</comment>
<comment type="sequence caution" evidence="2">
    <conflict type="erroneous initiation">
        <sequence resource="EMBL-CDS" id="AAH16820"/>
    </conflict>
</comment>
<proteinExistence type="evidence at transcript level"/>
<organism>
    <name type="scientific">Homo sapiens</name>
    <name type="common">Human</name>
    <dbReference type="NCBI Taxonomy" id="9606"/>
    <lineage>
        <taxon>Eukaryota</taxon>
        <taxon>Metazoa</taxon>
        <taxon>Chordata</taxon>
        <taxon>Craniata</taxon>
        <taxon>Vertebrata</taxon>
        <taxon>Euteleostomi</taxon>
        <taxon>Mammalia</taxon>
        <taxon>Eutheria</taxon>
        <taxon>Euarchontoglires</taxon>
        <taxon>Primates</taxon>
        <taxon>Haplorrhini</taxon>
        <taxon>Catarrhini</taxon>
        <taxon>Hominidae</taxon>
        <taxon>Homo</taxon>
    </lineage>
</organism>
<gene>
    <name type="primary">C6orf52</name>
</gene>
<sequence>MAQPESSADFGIAQQNNYYCYWQSLPSAIRVKQEFQPSQSYRYGNWYARQHGSYLLSGYSYGCAVDGNGKDCFSAHETPEHTAGTLVMPKETTPLAENQDEDPLEDPHLHLNIEESNQEFMVKSEELYDSLMNCHWQPLDTVHSEIPDETPK</sequence>
<name>CF052_HUMAN</name>
<feature type="chain" id="PRO_0000295687" description="Putative uncharacterized protein C6orf52">
    <location>
        <begin position="1"/>
        <end position="152"/>
    </location>
</feature>
<feature type="splice variant" id="VSP_026991" description="In isoform 2." evidence="1">
    <location>
        <begin position="1"/>
        <end position="87"/>
    </location>
</feature>
<feature type="sequence variant" id="VAR_033318" description="In dbSNP:rs7749306.">
    <original>A</original>
    <variation>D</variation>
    <location>
        <position position="13"/>
    </location>
</feature>
<evidence type="ECO:0000303" key="1">
    <source>
    </source>
</evidence>
<evidence type="ECO:0000305" key="2"/>
<keyword id="KW-0025">Alternative splicing</keyword>
<keyword id="KW-1185">Reference proteome</keyword>
<dbReference type="EMBL" id="AL358777">
    <property type="status" value="NOT_ANNOTATED_CDS"/>
    <property type="molecule type" value="Genomic_DNA"/>
</dbReference>
<dbReference type="EMBL" id="BC016820">
    <property type="protein sequence ID" value="AAH16820.1"/>
    <property type="status" value="ALT_INIT"/>
    <property type="molecule type" value="mRNA"/>
</dbReference>
<dbReference type="CCDS" id="CCDS47371.1">
    <molecule id="Q5T4I8-1"/>
</dbReference>
<dbReference type="RefSeq" id="NP_001138492.1">
    <molecule id="Q5T4I8-1"/>
    <property type="nucleotide sequence ID" value="NM_001145020.3"/>
</dbReference>
<dbReference type="FunCoup" id="Q5T4I8">
    <property type="interactions" value="455"/>
</dbReference>
<dbReference type="STRING" id="9606.ENSP00000259983"/>
<dbReference type="BioMuta" id="C6orf52"/>
<dbReference type="DMDM" id="158563914"/>
<dbReference type="MassIVE" id="Q5T4I8"/>
<dbReference type="PaxDb" id="9606-ENSP00000259983"/>
<dbReference type="Antibodypedia" id="63185">
    <property type="antibodies" value="37 antibodies from 7 providers"/>
</dbReference>
<dbReference type="DNASU" id="347744"/>
<dbReference type="Ensembl" id="ENST00000259983.8">
    <molecule id="Q5T4I8-1"/>
    <property type="protein sequence ID" value="ENSP00000259983.3"/>
    <property type="gene ID" value="ENSG00000137434.12"/>
</dbReference>
<dbReference type="Ensembl" id="ENST00000379586.5">
    <molecule id="Q5T4I8-2"/>
    <property type="protein sequence ID" value="ENSP00000368905.1"/>
    <property type="gene ID" value="ENSG00000137434.12"/>
</dbReference>
<dbReference type="Ensembl" id="ENST00000426700.6">
    <molecule id="Q5T4I8-1"/>
    <property type="protein sequence ID" value="ENSP00000410749.2"/>
    <property type="gene ID" value="ENSG00000137434.12"/>
</dbReference>
<dbReference type="Ensembl" id="ENST00000642282.1">
    <molecule id="Q5T4I8-1"/>
    <property type="protein sequence ID" value="ENSP00000494707.1"/>
    <property type="gene ID" value="ENSG00000285312.1"/>
</dbReference>
<dbReference type="Ensembl" id="ENST00000644703.1">
    <molecule id="Q5T4I8-1"/>
    <property type="protein sequence ID" value="ENSP00000495171.1"/>
    <property type="gene ID" value="ENSG00000285312.1"/>
</dbReference>
<dbReference type="Ensembl" id="ENST00000647114.1">
    <molecule id="Q5T4I8-2"/>
    <property type="protein sequence ID" value="ENSP00000493951.1"/>
    <property type="gene ID" value="ENSG00000285312.1"/>
</dbReference>
<dbReference type="GeneID" id="347744"/>
<dbReference type="KEGG" id="hsa:347744"/>
<dbReference type="MANE-Select" id="ENST00000259983.8">
    <property type="protein sequence ID" value="ENSP00000259983.3"/>
    <property type="RefSeq nucleotide sequence ID" value="NM_001145020.3"/>
    <property type="RefSeq protein sequence ID" value="NP_001138492.1"/>
</dbReference>
<dbReference type="UCSC" id="uc011dij.3">
    <molecule id="Q5T4I8-1"/>
    <property type="organism name" value="human"/>
</dbReference>
<dbReference type="AGR" id="HGNC:20881"/>
<dbReference type="CTD" id="347744"/>
<dbReference type="GeneCards" id="C6orf52"/>
<dbReference type="HGNC" id="HGNC:20881">
    <property type="gene designation" value="C6orf52"/>
</dbReference>
<dbReference type="HPA" id="ENSG00000137434">
    <property type="expression patterns" value="Tissue enhanced (testis)"/>
</dbReference>
<dbReference type="neXtProt" id="NX_Q5T4I8"/>
<dbReference type="OpenTargets" id="ENSG00000137434"/>
<dbReference type="PharmGKB" id="PA134991266"/>
<dbReference type="VEuPathDB" id="HostDB:ENSG00000137434"/>
<dbReference type="eggNOG" id="ENOG502TEG3">
    <property type="taxonomic scope" value="Eukaryota"/>
</dbReference>
<dbReference type="GeneTree" id="ENSGT00940000163315"/>
<dbReference type="HOGENOM" id="CLU_144889_0_0_1"/>
<dbReference type="InParanoid" id="Q5T4I8"/>
<dbReference type="OMA" id="YYWYWQS"/>
<dbReference type="OrthoDB" id="446113at2759"/>
<dbReference type="PAN-GO" id="Q5T4I8">
    <property type="GO annotations" value="0 GO annotations based on evolutionary models"/>
</dbReference>
<dbReference type="PhylomeDB" id="Q5T4I8"/>
<dbReference type="TreeFam" id="TF341075"/>
<dbReference type="PathwayCommons" id="Q5T4I8"/>
<dbReference type="BioGRID-ORCS" id="347744">
    <property type="hits" value="15 hits in 1122 CRISPR screens"/>
</dbReference>
<dbReference type="GenomeRNAi" id="347744"/>
<dbReference type="Pharos" id="Q5T4I8">
    <property type="development level" value="Tdark"/>
</dbReference>
<dbReference type="PRO" id="PR:Q5T4I8"/>
<dbReference type="Proteomes" id="UP000005640">
    <property type="component" value="Chromosome 6"/>
</dbReference>
<dbReference type="RNAct" id="Q5T4I8">
    <property type="molecule type" value="protein"/>
</dbReference>
<dbReference type="Bgee" id="ENSG00000137434">
    <property type="expression patterns" value="Expressed in male germ line stem cell (sensu Vertebrata) in testis and 96 other cell types or tissues"/>
</dbReference>
<dbReference type="ExpressionAtlas" id="Q5T4I8">
    <property type="expression patterns" value="baseline and differential"/>
</dbReference>
<dbReference type="InterPro" id="IPR040434">
    <property type="entry name" value="TSAP1"/>
</dbReference>
<dbReference type="InterPro" id="IPR041085">
    <property type="entry name" value="TSAP1_C"/>
</dbReference>
<dbReference type="PANTHER" id="PTHR37457:SF1">
    <property type="entry name" value="SIMILAR TO HUMAN CHROMOSOME 6 OPEN READING FRAME 52"/>
    <property type="match status" value="1"/>
</dbReference>
<dbReference type="PANTHER" id="PTHR37457">
    <property type="entry name" value="TRNA SELENOCYSTEINE 1-ASSOCIATED PROTEIN 1-RELATED"/>
    <property type="match status" value="1"/>
</dbReference>
<dbReference type="Pfam" id="PF17654">
    <property type="entry name" value="Trnau1ap"/>
    <property type="match status" value="1"/>
</dbReference>
<protein>
    <recommendedName>
        <fullName>Putative uncharacterized protein C6orf52</fullName>
    </recommendedName>
</protein>